<reference key="1">
    <citation type="journal article" date="2008" name="Genome Res.">
        <title>Genome sequence of the beta-rhizobium Cupriavidus taiwanensis and comparative genomics of rhizobia.</title>
        <authorList>
            <person name="Amadou C."/>
            <person name="Pascal G."/>
            <person name="Mangenot S."/>
            <person name="Glew M."/>
            <person name="Bontemps C."/>
            <person name="Capela D."/>
            <person name="Carrere S."/>
            <person name="Cruveiller S."/>
            <person name="Dossat C."/>
            <person name="Lajus A."/>
            <person name="Marchetti M."/>
            <person name="Poinsot V."/>
            <person name="Rouy Z."/>
            <person name="Servin B."/>
            <person name="Saad M."/>
            <person name="Schenowitz C."/>
            <person name="Barbe V."/>
            <person name="Batut J."/>
            <person name="Medigue C."/>
            <person name="Masson-Boivin C."/>
        </authorList>
    </citation>
    <scope>NUCLEOTIDE SEQUENCE [LARGE SCALE GENOMIC DNA]</scope>
    <source>
        <strain>DSM 17343 / BCRC 17206 / CCUG 44338 / CIP 107171 / LMG 19424 / R1</strain>
    </source>
</reference>
<evidence type="ECO:0000250" key="1"/>
<evidence type="ECO:0000305" key="2"/>
<protein>
    <recommendedName>
        <fullName>Putative 4-hydroxy-4-methyl-2-oxoglutarate aldolase</fullName>
        <shortName>HMG aldolase</shortName>
        <ecNumber>4.1.3.17</ecNumber>
    </recommendedName>
    <alternativeName>
        <fullName>Oxaloacetate decarboxylase</fullName>
        <shortName>OAA decarboxylase</shortName>
        <ecNumber>4.1.1.112</ecNumber>
    </alternativeName>
    <alternativeName>
        <fullName>Regulator of ribonuclease activity homolog</fullName>
    </alternativeName>
    <alternativeName>
        <fullName>RraA-like protein</fullName>
    </alternativeName>
</protein>
<keyword id="KW-0456">Lyase</keyword>
<keyword id="KW-0479">Metal-binding</keyword>
<name>RRAAH_CUPTR</name>
<comment type="function">
    <text evidence="1">Catalyzes the aldol cleavage of 4-hydroxy-4-methyl-2-oxoglutarate (HMG) into 2 molecules of pyruvate. Also contains a secondary oxaloacetate (OAA) decarboxylase activity due to the common pyruvate enolate transition state formed following C-C bond cleavage in the retro-aldol and decarboxylation reactions (By similarity).</text>
</comment>
<comment type="catalytic activity">
    <reaction>
        <text>4-hydroxy-4-methyl-2-oxoglutarate = 2 pyruvate</text>
        <dbReference type="Rhea" id="RHEA:22748"/>
        <dbReference type="ChEBI" id="CHEBI:15361"/>
        <dbReference type="ChEBI" id="CHEBI:58276"/>
        <dbReference type="EC" id="4.1.3.17"/>
    </reaction>
</comment>
<comment type="catalytic activity">
    <reaction>
        <text>oxaloacetate + H(+) = pyruvate + CO2</text>
        <dbReference type="Rhea" id="RHEA:15641"/>
        <dbReference type="ChEBI" id="CHEBI:15361"/>
        <dbReference type="ChEBI" id="CHEBI:15378"/>
        <dbReference type="ChEBI" id="CHEBI:16452"/>
        <dbReference type="ChEBI" id="CHEBI:16526"/>
        <dbReference type="EC" id="4.1.1.112"/>
    </reaction>
</comment>
<comment type="cofactor">
    <cofactor evidence="1">
        <name>a divalent metal cation</name>
        <dbReference type="ChEBI" id="CHEBI:60240"/>
    </cofactor>
    <text evidence="1">Divalent metal cation.</text>
</comment>
<comment type="subunit">
    <text evidence="1">Homotrimer.</text>
</comment>
<comment type="similarity">
    <text evidence="2">Belongs to the class II aldolase/RraA-like family.</text>
</comment>
<gene>
    <name type="ordered locus">RALTA_A1769</name>
</gene>
<dbReference type="EC" id="4.1.3.17"/>
<dbReference type="EC" id="4.1.1.112"/>
<dbReference type="EMBL" id="CU633749">
    <property type="protein sequence ID" value="CAQ69711.1"/>
    <property type="molecule type" value="Genomic_DNA"/>
</dbReference>
<dbReference type="RefSeq" id="WP_012353031.1">
    <property type="nucleotide sequence ID" value="NC_010528.1"/>
</dbReference>
<dbReference type="SMR" id="B3R2J3"/>
<dbReference type="GeneID" id="29761907"/>
<dbReference type="KEGG" id="cti:RALTA_A1769"/>
<dbReference type="eggNOG" id="COG0684">
    <property type="taxonomic scope" value="Bacteria"/>
</dbReference>
<dbReference type="HOGENOM" id="CLU_072626_4_1_4"/>
<dbReference type="BioCyc" id="CTAI977880:RALTA_RS08525-MONOMER"/>
<dbReference type="Proteomes" id="UP000001692">
    <property type="component" value="Chromosome 1"/>
</dbReference>
<dbReference type="GO" id="GO:0047443">
    <property type="term" value="F:4-hydroxy-4-methyl-2-oxoglutarate aldolase activity"/>
    <property type="evidence" value="ECO:0007669"/>
    <property type="project" value="UniProtKB-EC"/>
</dbReference>
<dbReference type="GO" id="GO:0046872">
    <property type="term" value="F:metal ion binding"/>
    <property type="evidence" value="ECO:0007669"/>
    <property type="project" value="UniProtKB-KW"/>
</dbReference>
<dbReference type="GO" id="GO:0008948">
    <property type="term" value="F:oxaloacetate decarboxylase activity"/>
    <property type="evidence" value="ECO:0007669"/>
    <property type="project" value="UniProtKB-EC"/>
</dbReference>
<dbReference type="GO" id="GO:0008428">
    <property type="term" value="F:ribonuclease inhibitor activity"/>
    <property type="evidence" value="ECO:0007669"/>
    <property type="project" value="InterPro"/>
</dbReference>
<dbReference type="GO" id="GO:0051252">
    <property type="term" value="P:regulation of RNA metabolic process"/>
    <property type="evidence" value="ECO:0007669"/>
    <property type="project" value="InterPro"/>
</dbReference>
<dbReference type="CDD" id="cd16841">
    <property type="entry name" value="RraA_family"/>
    <property type="match status" value="1"/>
</dbReference>
<dbReference type="Gene3D" id="3.50.30.40">
    <property type="entry name" value="Ribonuclease E inhibitor RraA/RraA-like"/>
    <property type="match status" value="1"/>
</dbReference>
<dbReference type="InterPro" id="IPR010203">
    <property type="entry name" value="RraA"/>
</dbReference>
<dbReference type="InterPro" id="IPR005493">
    <property type="entry name" value="RraA/RraA-like"/>
</dbReference>
<dbReference type="InterPro" id="IPR036704">
    <property type="entry name" value="RraA/RraA-like_sf"/>
</dbReference>
<dbReference type="NCBIfam" id="TIGR01935">
    <property type="entry name" value="NOT-MenG"/>
    <property type="match status" value="1"/>
</dbReference>
<dbReference type="NCBIfam" id="NF006875">
    <property type="entry name" value="PRK09372.1"/>
    <property type="match status" value="1"/>
</dbReference>
<dbReference type="PANTHER" id="PTHR33254">
    <property type="entry name" value="4-HYDROXY-4-METHYL-2-OXOGLUTARATE ALDOLASE 3-RELATED"/>
    <property type="match status" value="1"/>
</dbReference>
<dbReference type="PANTHER" id="PTHR33254:SF4">
    <property type="entry name" value="4-HYDROXY-4-METHYL-2-OXOGLUTARATE ALDOLASE 3-RELATED"/>
    <property type="match status" value="1"/>
</dbReference>
<dbReference type="Pfam" id="PF03737">
    <property type="entry name" value="RraA-like"/>
    <property type="match status" value="1"/>
</dbReference>
<dbReference type="SUPFAM" id="SSF89562">
    <property type="entry name" value="RraA-like"/>
    <property type="match status" value="1"/>
</dbReference>
<feature type="chain" id="PRO_1000125597" description="Putative 4-hydroxy-4-methyl-2-oxoglutarate aldolase">
    <location>
        <begin position="1"/>
        <end position="165"/>
    </location>
</feature>
<feature type="binding site" evidence="1">
    <location>
        <begin position="80"/>
        <end position="83"/>
    </location>
    <ligand>
        <name>substrate</name>
    </ligand>
</feature>
<feature type="binding site" evidence="1">
    <location>
        <position position="102"/>
    </location>
    <ligand>
        <name>substrate</name>
    </ligand>
</feature>
<feature type="binding site" evidence="1">
    <location>
        <position position="103"/>
    </location>
    <ligand>
        <name>a divalent metal cation</name>
        <dbReference type="ChEBI" id="CHEBI:60240"/>
    </ligand>
</feature>
<sequence>MKPVTTDLCDAHEDRLAEGTLRVMAPVFRAFGKQPAFAGPAATLKVFEDNSLVRATLESPGRGRVLVIDGGGSLRCALVGGNLGLLAEKNGWVGIVVNGCIRDTAELDVCDIGIRALAAHPQKSQKRNVGESEVTVQMPGAVVRPGNWIYVDVDGILVADDKLER</sequence>
<accession>B3R2J3</accession>
<organism>
    <name type="scientific">Cupriavidus taiwanensis (strain DSM 17343 / BCRC 17206 / CCUG 44338 / CIP 107171 / LMG 19424 / R1)</name>
    <name type="common">Ralstonia taiwanensis (strain LMG 19424)</name>
    <dbReference type="NCBI Taxonomy" id="977880"/>
    <lineage>
        <taxon>Bacteria</taxon>
        <taxon>Pseudomonadati</taxon>
        <taxon>Pseudomonadota</taxon>
        <taxon>Betaproteobacteria</taxon>
        <taxon>Burkholderiales</taxon>
        <taxon>Burkholderiaceae</taxon>
        <taxon>Cupriavidus</taxon>
    </lineage>
</organism>
<proteinExistence type="inferred from homology"/>